<feature type="chain" id="PRO_0000448642" description="Dendroaspis polylepis MT9" evidence="1">
    <location>
        <begin position="1"/>
        <end position="57"/>
    </location>
</feature>
<feature type="disulfide bond" evidence="1 6">
    <location>
        <begin position="3"/>
        <end position="22"/>
    </location>
</feature>
<feature type="disulfide bond" evidence="1 6">
    <location>
        <begin position="17"/>
        <end position="36"/>
    </location>
</feature>
<feature type="disulfide bond" evidence="1 6">
    <location>
        <begin position="38"/>
        <end position="49"/>
    </location>
</feature>
<feature type="disulfide bond" evidence="1 6">
    <location>
        <begin position="50"/>
        <end position="55"/>
    </location>
</feature>
<feature type="strand" evidence="7">
    <location>
        <begin position="2"/>
        <end position="4"/>
    </location>
</feature>
<feature type="strand" evidence="7">
    <location>
        <begin position="12"/>
        <end position="16"/>
    </location>
</feature>
<feature type="strand" evidence="7">
    <location>
        <begin position="18"/>
        <end position="20"/>
    </location>
</feature>
<feature type="strand" evidence="7">
    <location>
        <begin position="22"/>
        <end position="27"/>
    </location>
</feature>
<feature type="strand" evidence="7">
    <location>
        <begin position="30"/>
        <end position="37"/>
    </location>
</feature>
<feature type="strand" evidence="7">
    <location>
        <begin position="45"/>
        <end position="50"/>
    </location>
</feature>
<organism>
    <name type="scientific">Dendroaspis polylepis polylepis</name>
    <name type="common">Black mamba</name>
    <dbReference type="NCBI Taxonomy" id="8620"/>
    <lineage>
        <taxon>Eukaryota</taxon>
        <taxon>Metazoa</taxon>
        <taxon>Chordata</taxon>
        <taxon>Craniata</taxon>
        <taxon>Vertebrata</taxon>
        <taxon>Euteleostomi</taxon>
        <taxon>Lepidosauria</taxon>
        <taxon>Squamata</taxon>
        <taxon>Bifurcata</taxon>
        <taxon>Unidentata</taxon>
        <taxon>Episquamata</taxon>
        <taxon>Toxicofera</taxon>
        <taxon>Serpentes</taxon>
        <taxon>Colubroidea</taxon>
        <taxon>Elapidae</taxon>
        <taxon>Elapinae</taxon>
        <taxon>Dendroaspis</taxon>
    </lineage>
</organism>
<protein>
    <recommendedName>
        <fullName evidence="2">Dendroaspis polylepis MT9</fullName>
    </recommendedName>
    <alternativeName>
        <fullName evidence="2">Three-finger toxin</fullName>
        <shortName evidence="2">3FTx</shortName>
    </alternativeName>
</protein>
<accession>A0A4P1LYC9</accession>
<sequence length="57" mass="6364">TICHIQISKTHGILKTCEENSCYKMSVRGWIIGRGCGCPSAVRPRQVQCCTSDKCNY</sequence>
<dbReference type="PDB" id="6R5M">
    <property type="method" value="X-ray"/>
    <property type="resolution" value="1.90 A"/>
    <property type="chains" value="A/B/C=1-57"/>
</dbReference>
<dbReference type="PDBsum" id="6R5M"/>
<dbReference type="SMR" id="A0A4P1LYC9"/>
<dbReference type="GO" id="GO:0005576">
    <property type="term" value="C:extracellular region"/>
    <property type="evidence" value="ECO:0007669"/>
    <property type="project" value="UniProtKB-SubCell"/>
</dbReference>
<dbReference type="GO" id="GO:0090729">
    <property type="term" value="F:toxin activity"/>
    <property type="evidence" value="ECO:0007669"/>
    <property type="project" value="UniProtKB-KW"/>
</dbReference>
<dbReference type="CDD" id="cd00206">
    <property type="entry name" value="TFP_snake_toxin"/>
    <property type="match status" value="1"/>
</dbReference>
<dbReference type="Gene3D" id="2.10.60.10">
    <property type="entry name" value="CD59"/>
    <property type="match status" value="1"/>
</dbReference>
<dbReference type="InterPro" id="IPR003571">
    <property type="entry name" value="Snake_3FTx"/>
</dbReference>
<dbReference type="InterPro" id="IPR045860">
    <property type="entry name" value="Snake_toxin-like_sf"/>
</dbReference>
<dbReference type="InterPro" id="IPR018354">
    <property type="entry name" value="Snake_toxin_con_site"/>
</dbReference>
<dbReference type="InterPro" id="IPR054131">
    <property type="entry name" value="Toxin_cobra-type"/>
</dbReference>
<dbReference type="Pfam" id="PF21947">
    <property type="entry name" value="Toxin_cobra-type"/>
    <property type="match status" value="1"/>
</dbReference>
<dbReference type="SUPFAM" id="SSF57302">
    <property type="entry name" value="Snake toxin-like"/>
    <property type="match status" value="1"/>
</dbReference>
<dbReference type="PROSITE" id="PS00272">
    <property type="entry name" value="SNAKE_TOXIN"/>
    <property type="match status" value="1"/>
</dbReference>
<name>3SX9_DENPO</name>
<proteinExistence type="evidence at protein level"/>
<comment type="function">
    <text evidence="1">When tested on muscarinic GPCR, specifically antagonizes the type 2 receptor (CHRM2) subtype (Ki/Kd=120-399 nM). Ex vivo, it reverses the M2R-agonist-induced relaxation in rat and human arteries.</text>
</comment>
<comment type="subcellular location">
    <subcellularLocation>
        <location evidence="3">Secreted</location>
    </subcellularLocation>
</comment>
<comment type="tissue specificity">
    <text evidence="4">Expressed by the venom gland.</text>
</comment>
<comment type="biotechnology">
    <text evidence="1">It should provide a tool for further understanding of the effect of M2R in various arteries and may position itself as a new drug candidate in cardio-vascular diseases.</text>
</comment>
<comment type="miscellaneous">
    <text evidence="1">Negative results: does not show activity on the muscarinic type 1, 3, 4 and 5 receptor subtypes (CHRM1, CHRM3, CHRM4, and CHRM5) at concentrations up to 100 uM.</text>
</comment>
<comment type="similarity">
    <text evidence="3">Belongs to the three-finger toxin family. Short-chain subfamily.</text>
</comment>
<reference evidence="5" key="1">
    <citation type="journal article" date="2022" name="Biomed. Pharmacother.">
        <title>MT9, a natural peptide from black mamba venom antagonizes the muscarinic type 2 receptor and reverses the M2R-agonist-induced relaxation in rat and human arteries.</title>
        <authorList>
            <person name="Ciolek J."/>
            <person name="Zoukimian C."/>
            <person name="Dhot J."/>
            <person name="Burban M."/>
            <person name="Triquigneaux M."/>
            <person name="Lauzier B."/>
            <person name="Guimbert C."/>
            <person name="Boturyn D."/>
            <person name="Ferron M."/>
            <person name="Ciccone L."/>
            <person name="Tepshi L."/>
            <person name="Stura E."/>
            <person name="Legrand P."/>
            <person name="Robin P."/>
            <person name="Mourier G."/>
            <person name="Schaack B."/>
            <person name="Fellah I."/>
            <person name="Blanchet G."/>
            <person name="Gauthier-Erfanian C."/>
            <person name="Beroud R."/>
            <person name="Servent D."/>
            <person name="De Waard M."/>
            <person name="Gilles N."/>
        </authorList>
    </citation>
    <scope>PROTEIN SEQUENCE</scope>
    <scope>X-RAY CRYSTALLOGRAPHY (2.10 ANGSTROMS)</scope>
    <scope>FUNCTION</scope>
    <scope>DISULFIDE BONDS</scope>
    <scope>SYNTHESIS</scope>
    <source>
        <tissue>Venom</tissue>
    </source>
</reference>
<keyword id="KW-0002">3D-structure</keyword>
<keyword id="KW-0903">Direct protein sequencing</keyword>
<keyword id="KW-1015">Disulfide bond</keyword>
<keyword id="KW-1214">G-protein coupled acetylcholine receptor impairing toxin</keyword>
<keyword id="KW-1213">G-protein coupled receptor impairing toxin</keyword>
<keyword id="KW-0528">Neurotoxin</keyword>
<keyword id="KW-0629">Postsynaptic neurotoxin</keyword>
<keyword id="KW-0964">Secreted</keyword>
<keyword id="KW-0800">Toxin</keyword>
<evidence type="ECO:0000269" key="1">
    <source>
    </source>
</evidence>
<evidence type="ECO:0000303" key="2">
    <source>
    </source>
</evidence>
<evidence type="ECO:0000305" key="3"/>
<evidence type="ECO:0000305" key="4">
    <source>
    </source>
</evidence>
<evidence type="ECO:0000312" key="5">
    <source>
        <dbReference type="PDB" id="6R5M"/>
    </source>
</evidence>
<evidence type="ECO:0007744" key="6">
    <source>
        <dbReference type="PDB" id="6R5M"/>
    </source>
</evidence>
<evidence type="ECO:0007829" key="7">
    <source>
        <dbReference type="PDB" id="6R5M"/>
    </source>
</evidence>